<dbReference type="EC" id="2.4.99.17" evidence="1"/>
<dbReference type="EMBL" id="CP000572">
    <property type="protein sequence ID" value="ABN92461.1"/>
    <property type="molecule type" value="Genomic_DNA"/>
</dbReference>
<dbReference type="RefSeq" id="WP_004527707.1">
    <property type="nucleotide sequence ID" value="NC_009076.1"/>
</dbReference>
<dbReference type="SMR" id="A3NZ26"/>
<dbReference type="GeneID" id="93061459"/>
<dbReference type="KEGG" id="bpl:BURPS1106A_3360"/>
<dbReference type="HOGENOM" id="CLU_039110_1_0_4"/>
<dbReference type="UniPathway" id="UPA00392"/>
<dbReference type="Proteomes" id="UP000006738">
    <property type="component" value="Chromosome I"/>
</dbReference>
<dbReference type="GO" id="GO:0005737">
    <property type="term" value="C:cytoplasm"/>
    <property type="evidence" value="ECO:0007669"/>
    <property type="project" value="UniProtKB-SubCell"/>
</dbReference>
<dbReference type="GO" id="GO:0051075">
    <property type="term" value="F:S-adenosylmethionine:tRNA ribosyltransferase-isomerase activity"/>
    <property type="evidence" value="ECO:0007669"/>
    <property type="project" value="UniProtKB-EC"/>
</dbReference>
<dbReference type="GO" id="GO:0008616">
    <property type="term" value="P:queuosine biosynthetic process"/>
    <property type="evidence" value="ECO:0007669"/>
    <property type="project" value="UniProtKB-UniRule"/>
</dbReference>
<dbReference type="GO" id="GO:0002099">
    <property type="term" value="P:tRNA wobble guanine modification"/>
    <property type="evidence" value="ECO:0007669"/>
    <property type="project" value="TreeGrafter"/>
</dbReference>
<dbReference type="FunFam" id="3.40.1780.10:FF:000001">
    <property type="entry name" value="S-adenosylmethionine:tRNA ribosyltransferase-isomerase"/>
    <property type="match status" value="1"/>
</dbReference>
<dbReference type="Gene3D" id="2.40.10.240">
    <property type="entry name" value="QueA-like"/>
    <property type="match status" value="1"/>
</dbReference>
<dbReference type="Gene3D" id="3.40.1780.10">
    <property type="entry name" value="QueA-like"/>
    <property type="match status" value="1"/>
</dbReference>
<dbReference type="HAMAP" id="MF_00113">
    <property type="entry name" value="QueA"/>
    <property type="match status" value="1"/>
</dbReference>
<dbReference type="InterPro" id="IPR003699">
    <property type="entry name" value="QueA"/>
</dbReference>
<dbReference type="InterPro" id="IPR042118">
    <property type="entry name" value="QueA_dom1"/>
</dbReference>
<dbReference type="InterPro" id="IPR042119">
    <property type="entry name" value="QueA_dom2"/>
</dbReference>
<dbReference type="InterPro" id="IPR036100">
    <property type="entry name" value="QueA_sf"/>
</dbReference>
<dbReference type="NCBIfam" id="NF001140">
    <property type="entry name" value="PRK00147.1"/>
    <property type="match status" value="1"/>
</dbReference>
<dbReference type="NCBIfam" id="TIGR00113">
    <property type="entry name" value="queA"/>
    <property type="match status" value="1"/>
</dbReference>
<dbReference type="PANTHER" id="PTHR30307">
    <property type="entry name" value="S-ADENOSYLMETHIONINE:TRNA RIBOSYLTRANSFERASE-ISOMERASE"/>
    <property type="match status" value="1"/>
</dbReference>
<dbReference type="PANTHER" id="PTHR30307:SF0">
    <property type="entry name" value="S-ADENOSYLMETHIONINE:TRNA RIBOSYLTRANSFERASE-ISOMERASE"/>
    <property type="match status" value="1"/>
</dbReference>
<dbReference type="Pfam" id="PF02547">
    <property type="entry name" value="Queuosine_synth"/>
    <property type="match status" value="1"/>
</dbReference>
<dbReference type="SUPFAM" id="SSF111337">
    <property type="entry name" value="QueA-like"/>
    <property type="match status" value="1"/>
</dbReference>
<protein>
    <recommendedName>
        <fullName evidence="1">S-adenosylmethionine:tRNA ribosyltransferase-isomerase</fullName>
        <ecNumber evidence="1">2.4.99.17</ecNumber>
    </recommendedName>
    <alternativeName>
        <fullName evidence="1">Queuosine biosynthesis protein QueA</fullName>
    </alternativeName>
</protein>
<keyword id="KW-0963">Cytoplasm</keyword>
<keyword id="KW-0671">Queuosine biosynthesis</keyword>
<keyword id="KW-0949">S-adenosyl-L-methionine</keyword>
<keyword id="KW-0808">Transferase</keyword>
<feature type="chain" id="PRO_1000015191" description="S-adenosylmethionine:tRNA ribosyltransferase-isomerase">
    <location>
        <begin position="1"/>
        <end position="360"/>
    </location>
</feature>
<gene>
    <name evidence="1" type="primary">queA</name>
    <name type="ordered locus">BURPS1106A_3360</name>
</gene>
<proteinExistence type="inferred from homology"/>
<evidence type="ECO:0000255" key="1">
    <source>
        <dbReference type="HAMAP-Rule" id="MF_00113"/>
    </source>
</evidence>
<comment type="function">
    <text evidence="1">Transfers and isomerizes the ribose moiety from AdoMet to the 7-aminomethyl group of 7-deazaguanine (preQ1-tRNA) to give epoxyqueuosine (oQ-tRNA).</text>
</comment>
<comment type="catalytic activity">
    <reaction evidence="1">
        <text>7-aminomethyl-7-carbaguanosine(34) in tRNA + S-adenosyl-L-methionine = epoxyqueuosine(34) in tRNA + adenine + L-methionine + 2 H(+)</text>
        <dbReference type="Rhea" id="RHEA:32155"/>
        <dbReference type="Rhea" id="RHEA-COMP:10342"/>
        <dbReference type="Rhea" id="RHEA-COMP:18582"/>
        <dbReference type="ChEBI" id="CHEBI:15378"/>
        <dbReference type="ChEBI" id="CHEBI:16708"/>
        <dbReference type="ChEBI" id="CHEBI:57844"/>
        <dbReference type="ChEBI" id="CHEBI:59789"/>
        <dbReference type="ChEBI" id="CHEBI:82833"/>
        <dbReference type="ChEBI" id="CHEBI:194443"/>
        <dbReference type="EC" id="2.4.99.17"/>
    </reaction>
</comment>
<comment type="pathway">
    <text evidence="1">tRNA modification; tRNA-queuosine biosynthesis.</text>
</comment>
<comment type="subunit">
    <text evidence="1">Monomer.</text>
</comment>
<comment type="subcellular location">
    <subcellularLocation>
        <location evidence="1">Cytoplasm</location>
    </subcellularLocation>
</comment>
<comment type="similarity">
    <text evidence="1">Belongs to the QueA family.</text>
</comment>
<sequence length="360" mass="39123">MLTLSDFDFDLPPELIAQTALPERSASRLLEVDNTNPSAPPRLVDRRFAELPACVAPGDLLVFNDTKVLKARFFGRKASGGKIEVLIERVTGERTALAQIRASKSPPPGTTLTLADAFDVTVGERVEPFFTLHFPDDCLVLIERHGRLPLPPYIEHAPDAADETRYQTVFAANPGAVAAPTAGLHFDDAVLAALEARGVERATLTLHVGAGTFQPVRVENLAEHRMHSESYELTDALVEKIAATRARGGRVIAVGTTSMRALEAAARDAQAAGRPLAATRAETDIFITPGYRFRVVDRLVTNFHLPKSTLLMLVSAFAGIETIRAAYRHAIDARYRFFSYGDAMLLTRRDDAAEATHGGA</sequence>
<organism>
    <name type="scientific">Burkholderia pseudomallei (strain 1106a)</name>
    <dbReference type="NCBI Taxonomy" id="357348"/>
    <lineage>
        <taxon>Bacteria</taxon>
        <taxon>Pseudomonadati</taxon>
        <taxon>Pseudomonadota</taxon>
        <taxon>Betaproteobacteria</taxon>
        <taxon>Burkholderiales</taxon>
        <taxon>Burkholderiaceae</taxon>
        <taxon>Burkholderia</taxon>
        <taxon>pseudomallei group</taxon>
    </lineage>
</organism>
<reference key="1">
    <citation type="journal article" date="2010" name="Genome Biol. Evol.">
        <title>Continuing evolution of Burkholderia mallei through genome reduction and large-scale rearrangements.</title>
        <authorList>
            <person name="Losada L."/>
            <person name="Ronning C.M."/>
            <person name="DeShazer D."/>
            <person name="Woods D."/>
            <person name="Fedorova N."/>
            <person name="Kim H.S."/>
            <person name="Shabalina S.A."/>
            <person name="Pearson T.R."/>
            <person name="Brinkac L."/>
            <person name="Tan P."/>
            <person name="Nandi T."/>
            <person name="Crabtree J."/>
            <person name="Badger J."/>
            <person name="Beckstrom-Sternberg S."/>
            <person name="Saqib M."/>
            <person name="Schutzer S.E."/>
            <person name="Keim P."/>
            <person name="Nierman W.C."/>
        </authorList>
    </citation>
    <scope>NUCLEOTIDE SEQUENCE [LARGE SCALE GENOMIC DNA]</scope>
    <source>
        <strain>1106a</strain>
    </source>
</reference>
<name>QUEA_BURP0</name>
<accession>A3NZ26</accession>